<name>FABH_BURP6</name>
<organism>
    <name type="scientific">Burkholderia pseudomallei (strain 668)</name>
    <dbReference type="NCBI Taxonomy" id="320373"/>
    <lineage>
        <taxon>Bacteria</taxon>
        <taxon>Pseudomonadati</taxon>
        <taxon>Pseudomonadota</taxon>
        <taxon>Betaproteobacteria</taxon>
        <taxon>Burkholderiales</taxon>
        <taxon>Burkholderiaceae</taxon>
        <taxon>Burkholderia</taxon>
        <taxon>pseudomallei group</taxon>
    </lineage>
</organism>
<sequence length="329" mass="34853">MAQSTLYSRVLGTGSYLPPDRVTNQELADRLAKDGIETSDEWIVARTGIRARHFAAPDVTTSDLALVAAQRAIEAADVDPQSIDLIIVATSTPDFVFPSTACLLQNKLGIKNGGAAFDVQAVCSGFAYALATADSFIRTGQHRTALVIGAETFSRILDFKDRTTCVLFGDGAGAVVLSASEEPGILGSALHADGSYSNILCTPGNVNRGVIAGSAFLHMDGQAVFKLAVNVLEKVAVEALSKAELASEQVDWLIPHQANIRIMTSTCRKLGLPQERMIVTVDEHGNTSAASIPLALDVAVRDGRIKRGQHVLIEGVGGGFTWGASVFRF</sequence>
<accession>A3NBU2</accession>
<comment type="function">
    <text evidence="1">Catalyzes the condensation reaction of fatty acid synthesis by the addition to an acyl acceptor of two carbons from malonyl-ACP. Catalyzes the first condensation reaction which initiates fatty acid synthesis and may therefore play a role in governing the total rate of fatty acid production. Possesses both acetoacetyl-ACP synthase and acetyl transacylase activities. Its substrate specificity determines the biosynthesis of branched-chain and/or straight-chain of fatty acids.</text>
</comment>
<comment type="catalytic activity">
    <reaction evidence="1">
        <text>malonyl-[ACP] + acetyl-CoA + H(+) = 3-oxobutanoyl-[ACP] + CO2 + CoA</text>
        <dbReference type="Rhea" id="RHEA:12080"/>
        <dbReference type="Rhea" id="RHEA-COMP:9623"/>
        <dbReference type="Rhea" id="RHEA-COMP:9625"/>
        <dbReference type="ChEBI" id="CHEBI:15378"/>
        <dbReference type="ChEBI" id="CHEBI:16526"/>
        <dbReference type="ChEBI" id="CHEBI:57287"/>
        <dbReference type="ChEBI" id="CHEBI:57288"/>
        <dbReference type="ChEBI" id="CHEBI:78449"/>
        <dbReference type="ChEBI" id="CHEBI:78450"/>
        <dbReference type="EC" id="2.3.1.180"/>
    </reaction>
</comment>
<comment type="pathway">
    <text evidence="1">Lipid metabolism; fatty acid biosynthesis.</text>
</comment>
<comment type="subunit">
    <text evidence="1">Homodimer.</text>
</comment>
<comment type="subcellular location">
    <subcellularLocation>
        <location evidence="1">Cytoplasm</location>
    </subcellularLocation>
</comment>
<comment type="domain">
    <text evidence="1">The last Arg residue of the ACP-binding site is essential for the weak association between ACP/AcpP and FabH.</text>
</comment>
<comment type="similarity">
    <text evidence="1">Belongs to the thiolase-like superfamily. FabH family.</text>
</comment>
<gene>
    <name evidence="1" type="primary">fabH</name>
    <name type="ordered locus">BURPS668_2792</name>
</gene>
<reference key="1">
    <citation type="journal article" date="2010" name="Genome Biol. Evol.">
        <title>Continuing evolution of Burkholderia mallei through genome reduction and large-scale rearrangements.</title>
        <authorList>
            <person name="Losada L."/>
            <person name="Ronning C.M."/>
            <person name="DeShazer D."/>
            <person name="Woods D."/>
            <person name="Fedorova N."/>
            <person name="Kim H.S."/>
            <person name="Shabalina S.A."/>
            <person name="Pearson T.R."/>
            <person name="Brinkac L."/>
            <person name="Tan P."/>
            <person name="Nandi T."/>
            <person name="Crabtree J."/>
            <person name="Badger J."/>
            <person name="Beckstrom-Sternberg S."/>
            <person name="Saqib M."/>
            <person name="Schutzer S.E."/>
            <person name="Keim P."/>
            <person name="Nierman W.C."/>
        </authorList>
    </citation>
    <scope>NUCLEOTIDE SEQUENCE [LARGE SCALE GENOMIC DNA]</scope>
    <source>
        <strain>668</strain>
    </source>
</reference>
<keyword id="KW-0012">Acyltransferase</keyword>
<keyword id="KW-0963">Cytoplasm</keyword>
<keyword id="KW-0275">Fatty acid biosynthesis</keyword>
<keyword id="KW-0276">Fatty acid metabolism</keyword>
<keyword id="KW-0444">Lipid biosynthesis</keyword>
<keyword id="KW-0443">Lipid metabolism</keyword>
<keyword id="KW-0511">Multifunctional enzyme</keyword>
<keyword id="KW-0808">Transferase</keyword>
<evidence type="ECO:0000255" key="1">
    <source>
        <dbReference type="HAMAP-Rule" id="MF_01815"/>
    </source>
</evidence>
<proteinExistence type="inferred from homology"/>
<feature type="chain" id="PRO_1000070223" description="Beta-ketoacyl-[acyl-carrier-protein] synthase III">
    <location>
        <begin position="1"/>
        <end position="329"/>
    </location>
</feature>
<feature type="region of interest" description="ACP-binding" evidence="1">
    <location>
        <begin position="257"/>
        <end position="261"/>
    </location>
</feature>
<feature type="active site" evidence="1">
    <location>
        <position position="123"/>
    </location>
</feature>
<feature type="active site" evidence="1">
    <location>
        <position position="256"/>
    </location>
</feature>
<feature type="active site" evidence="1">
    <location>
        <position position="286"/>
    </location>
</feature>
<dbReference type="EC" id="2.3.1.180" evidence="1"/>
<dbReference type="EMBL" id="CP000570">
    <property type="protein sequence ID" value="ABN82188.1"/>
    <property type="molecule type" value="Genomic_DNA"/>
</dbReference>
<dbReference type="RefSeq" id="WP_004524613.1">
    <property type="nucleotide sequence ID" value="NC_009074.1"/>
</dbReference>
<dbReference type="SMR" id="A3NBU2"/>
<dbReference type="KEGG" id="bpd:BURPS668_2792"/>
<dbReference type="HOGENOM" id="CLU_039592_3_1_4"/>
<dbReference type="UniPathway" id="UPA00094"/>
<dbReference type="GO" id="GO:0005737">
    <property type="term" value="C:cytoplasm"/>
    <property type="evidence" value="ECO:0007669"/>
    <property type="project" value="UniProtKB-SubCell"/>
</dbReference>
<dbReference type="GO" id="GO:0004315">
    <property type="term" value="F:3-oxoacyl-[acyl-carrier-protein] synthase activity"/>
    <property type="evidence" value="ECO:0007669"/>
    <property type="project" value="InterPro"/>
</dbReference>
<dbReference type="GO" id="GO:0033818">
    <property type="term" value="F:beta-ketoacyl-acyl-carrier-protein synthase III activity"/>
    <property type="evidence" value="ECO:0007669"/>
    <property type="project" value="UniProtKB-UniRule"/>
</dbReference>
<dbReference type="GO" id="GO:0006633">
    <property type="term" value="P:fatty acid biosynthetic process"/>
    <property type="evidence" value="ECO:0007669"/>
    <property type="project" value="UniProtKB-UniRule"/>
</dbReference>
<dbReference type="CDD" id="cd00830">
    <property type="entry name" value="KAS_III"/>
    <property type="match status" value="1"/>
</dbReference>
<dbReference type="FunFam" id="3.40.47.10:FF:000004">
    <property type="entry name" value="3-oxoacyl-[acyl-carrier-protein] synthase 3"/>
    <property type="match status" value="1"/>
</dbReference>
<dbReference type="Gene3D" id="3.40.47.10">
    <property type="match status" value="2"/>
</dbReference>
<dbReference type="HAMAP" id="MF_01815">
    <property type="entry name" value="FabH"/>
    <property type="match status" value="1"/>
</dbReference>
<dbReference type="InterPro" id="IPR013747">
    <property type="entry name" value="ACP_syn_III_C"/>
</dbReference>
<dbReference type="InterPro" id="IPR013751">
    <property type="entry name" value="ACP_syn_III_N"/>
</dbReference>
<dbReference type="InterPro" id="IPR004655">
    <property type="entry name" value="FabH"/>
</dbReference>
<dbReference type="InterPro" id="IPR016039">
    <property type="entry name" value="Thiolase-like"/>
</dbReference>
<dbReference type="NCBIfam" id="TIGR00747">
    <property type="entry name" value="fabH"/>
    <property type="match status" value="1"/>
</dbReference>
<dbReference type="NCBIfam" id="NF006829">
    <property type="entry name" value="PRK09352.1"/>
    <property type="match status" value="1"/>
</dbReference>
<dbReference type="PANTHER" id="PTHR43091">
    <property type="entry name" value="3-OXOACYL-[ACYL-CARRIER-PROTEIN] SYNTHASE"/>
    <property type="match status" value="1"/>
</dbReference>
<dbReference type="PANTHER" id="PTHR43091:SF1">
    <property type="entry name" value="BETA-KETOACYL-[ACYL-CARRIER-PROTEIN] SYNTHASE III, CHLOROPLASTIC"/>
    <property type="match status" value="1"/>
</dbReference>
<dbReference type="Pfam" id="PF08545">
    <property type="entry name" value="ACP_syn_III"/>
    <property type="match status" value="1"/>
</dbReference>
<dbReference type="Pfam" id="PF08541">
    <property type="entry name" value="ACP_syn_III_C"/>
    <property type="match status" value="1"/>
</dbReference>
<dbReference type="SUPFAM" id="SSF53901">
    <property type="entry name" value="Thiolase-like"/>
    <property type="match status" value="1"/>
</dbReference>
<protein>
    <recommendedName>
        <fullName evidence="1">Beta-ketoacyl-[acyl-carrier-protein] synthase III</fullName>
        <shortName evidence="1">Beta-ketoacyl-ACP synthase III</shortName>
        <shortName evidence="1">KAS III</shortName>
        <ecNumber evidence="1">2.3.1.180</ecNumber>
    </recommendedName>
    <alternativeName>
        <fullName evidence="1">3-oxoacyl-[acyl-carrier-protein] synthase 3</fullName>
    </alternativeName>
    <alternativeName>
        <fullName evidence="1">3-oxoacyl-[acyl-carrier-protein] synthase III</fullName>
    </alternativeName>
</protein>